<comment type="function">
    <text evidence="1">Catalyzes the NAD(+)-dependent oxidation of L-threonine to 2-amino-3-ketobutyrate.</text>
</comment>
<comment type="catalytic activity">
    <reaction evidence="1">
        <text>L-threonine + NAD(+) = (2S)-2-amino-3-oxobutanoate + NADH + H(+)</text>
        <dbReference type="Rhea" id="RHEA:13161"/>
        <dbReference type="ChEBI" id="CHEBI:15378"/>
        <dbReference type="ChEBI" id="CHEBI:57540"/>
        <dbReference type="ChEBI" id="CHEBI:57926"/>
        <dbReference type="ChEBI" id="CHEBI:57945"/>
        <dbReference type="ChEBI" id="CHEBI:78948"/>
        <dbReference type="EC" id="1.1.1.103"/>
    </reaction>
</comment>
<comment type="cofactor">
    <cofactor evidence="1">
        <name>Zn(2+)</name>
        <dbReference type="ChEBI" id="CHEBI:29105"/>
    </cofactor>
    <text evidence="1">Binds 2 Zn(2+) ions per subunit.</text>
</comment>
<comment type="pathway">
    <text evidence="1">Amino-acid degradation; L-threonine degradation via oxydo-reductase pathway; glycine from L-threonine: step 1/2.</text>
</comment>
<comment type="subunit">
    <text evidence="1">Homotetramer.</text>
</comment>
<comment type="subcellular location">
    <subcellularLocation>
        <location evidence="1">Cytoplasm</location>
    </subcellularLocation>
</comment>
<comment type="similarity">
    <text evidence="1">Belongs to the zinc-containing alcohol dehydrogenase family.</text>
</comment>
<dbReference type="EC" id="1.1.1.103" evidence="1"/>
<dbReference type="EMBL" id="CP001359">
    <property type="protein sequence ID" value="ACL65204.1"/>
    <property type="molecule type" value="Genomic_DNA"/>
</dbReference>
<dbReference type="RefSeq" id="WP_012633123.1">
    <property type="nucleotide sequence ID" value="NC_011891.1"/>
</dbReference>
<dbReference type="SMR" id="B8J714"/>
<dbReference type="KEGG" id="acp:A2cp1_1862"/>
<dbReference type="HOGENOM" id="CLU_026673_11_0_7"/>
<dbReference type="UniPathway" id="UPA00046">
    <property type="reaction ID" value="UER00505"/>
</dbReference>
<dbReference type="Proteomes" id="UP000007089">
    <property type="component" value="Chromosome"/>
</dbReference>
<dbReference type="GO" id="GO:0005737">
    <property type="term" value="C:cytoplasm"/>
    <property type="evidence" value="ECO:0007669"/>
    <property type="project" value="UniProtKB-SubCell"/>
</dbReference>
<dbReference type="GO" id="GO:0008743">
    <property type="term" value="F:L-threonine 3-dehydrogenase activity"/>
    <property type="evidence" value="ECO:0007669"/>
    <property type="project" value="UniProtKB-UniRule"/>
</dbReference>
<dbReference type="GO" id="GO:0008270">
    <property type="term" value="F:zinc ion binding"/>
    <property type="evidence" value="ECO:0007669"/>
    <property type="project" value="UniProtKB-UniRule"/>
</dbReference>
<dbReference type="GO" id="GO:0019518">
    <property type="term" value="P:L-threonine catabolic process to glycine"/>
    <property type="evidence" value="ECO:0007669"/>
    <property type="project" value="UniProtKB-UniPathway"/>
</dbReference>
<dbReference type="Gene3D" id="3.90.180.10">
    <property type="entry name" value="Medium-chain alcohol dehydrogenases, catalytic domain"/>
    <property type="match status" value="1"/>
</dbReference>
<dbReference type="Gene3D" id="3.40.50.720">
    <property type="entry name" value="NAD(P)-binding Rossmann-like Domain"/>
    <property type="match status" value="1"/>
</dbReference>
<dbReference type="HAMAP" id="MF_00627">
    <property type="entry name" value="Thr_dehydrog"/>
    <property type="match status" value="1"/>
</dbReference>
<dbReference type="InterPro" id="IPR013149">
    <property type="entry name" value="ADH-like_C"/>
</dbReference>
<dbReference type="InterPro" id="IPR013154">
    <property type="entry name" value="ADH-like_N"/>
</dbReference>
<dbReference type="InterPro" id="IPR002328">
    <property type="entry name" value="ADH_Zn_CS"/>
</dbReference>
<dbReference type="InterPro" id="IPR011032">
    <property type="entry name" value="GroES-like_sf"/>
</dbReference>
<dbReference type="InterPro" id="IPR004627">
    <property type="entry name" value="L-Threonine_3-DHase"/>
</dbReference>
<dbReference type="InterPro" id="IPR036291">
    <property type="entry name" value="NAD(P)-bd_dom_sf"/>
</dbReference>
<dbReference type="InterPro" id="IPR020843">
    <property type="entry name" value="PKS_ER"/>
</dbReference>
<dbReference type="InterPro" id="IPR050129">
    <property type="entry name" value="Zn_alcohol_dh"/>
</dbReference>
<dbReference type="NCBIfam" id="NF003808">
    <property type="entry name" value="PRK05396.1"/>
    <property type="match status" value="1"/>
</dbReference>
<dbReference type="NCBIfam" id="TIGR00692">
    <property type="entry name" value="tdh"/>
    <property type="match status" value="1"/>
</dbReference>
<dbReference type="PANTHER" id="PTHR43401">
    <property type="entry name" value="L-THREONINE 3-DEHYDROGENASE"/>
    <property type="match status" value="1"/>
</dbReference>
<dbReference type="PANTHER" id="PTHR43401:SF2">
    <property type="entry name" value="L-THREONINE 3-DEHYDROGENASE"/>
    <property type="match status" value="1"/>
</dbReference>
<dbReference type="Pfam" id="PF08240">
    <property type="entry name" value="ADH_N"/>
    <property type="match status" value="1"/>
</dbReference>
<dbReference type="Pfam" id="PF00107">
    <property type="entry name" value="ADH_zinc_N"/>
    <property type="match status" value="1"/>
</dbReference>
<dbReference type="SMART" id="SM00829">
    <property type="entry name" value="PKS_ER"/>
    <property type="match status" value="1"/>
</dbReference>
<dbReference type="SUPFAM" id="SSF50129">
    <property type="entry name" value="GroES-like"/>
    <property type="match status" value="1"/>
</dbReference>
<dbReference type="SUPFAM" id="SSF51735">
    <property type="entry name" value="NAD(P)-binding Rossmann-fold domains"/>
    <property type="match status" value="1"/>
</dbReference>
<dbReference type="PROSITE" id="PS00059">
    <property type="entry name" value="ADH_ZINC"/>
    <property type="match status" value="1"/>
</dbReference>
<protein>
    <recommendedName>
        <fullName evidence="1">L-threonine 3-dehydrogenase</fullName>
        <shortName evidence="1">TDH</shortName>
        <ecNumber evidence="1">1.1.1.103</ecNumber>
    </recommendedName>
</protein>
<organism>
    <name type="scientific">Anaeromyxobacter dehalogenans (strain 2CP-1 / ATCC BAA-258)</name>
    <dbReference type="NCBI Taxonomy" id="455488"/>
    <lineage>
        <taxon>Bacteria</taxon>
        <taxon>Pseudomonadati</taxon>
        <taxon>Myxococcota</taxon>
        <taxon>Myxococcia</taxon>
        <taxon>Myxococcales</taxon>
        <taxon>Cystobacterineae</taxon>
        <taxon>Anaeromyxobacteraceae</taxon>
        <taxon>Anaeromyxobacter</taxon>
    </lineage>
</organism>
<reference key="1">
    <citation type="submission" date="2009-01" db="EMBL/GenBank/DDBJ databases">
        <title>Complete sequence of Anaeromyxobacter dehalogenans 2CP-1.</title>
        <authorList>
            <person name="Lucas S."/>
            <person name="Copeland A."/>
            <person name="Lapidus A."/>
            <person name="Glavina del Rio T."/>
            <person name="Dalin E."/>
            <person name="Tice H."/>
            <person name="Bruce D."/>
            <person name="Goodwin L."/>
            <person name="Pitluck S."/>
            <person name="Saunders E."/>
            <person name="Brettin T."/>
            <person name="Detter J.C."/>
            <person name="Han C."/>
            <person name="Larimer F."/>
            <person name="Land M."/>
            <person name="Hauser L."/>
            <person name="Kyrpides N."/>
            <person name="Ovchinnikova G."/>
            <person name="Beliaev A.S."/>
            <person name="Richardson P."/>
        </authorList>
    </citation>
    <scope>NUCLEOTIDE SEQUENCE [LARGE SCALE GENOMIC DNA]</scope>
    <source>
        <strain>2CP-1 / ATCC BAA-258</strain>
    </source>
</reference>
<evidence type="ECO:0000255" key="1">
    <source>
        <dbReference type="HAMAP-Rule" id="MF_00627"/>
    </source>
</evidence>
<proteinExistence type="inferred from homology"/>
<sequence length="345" mass="37886">MKALVKAKREEGIWMQHDVPVPEVGVHDVMIRVTKSAICGTDVHIYNWDEWSQKTVPVPMVVGHEYVGRVEKVGAEVEAFRPGERVSGEGHVTCGFCRNCRAGRRHLCRHTVGVGVNRPGSFAEYVVIPADNVYRIPDDIPDDIAAIFDPFGNATHTALSFDLVGEDVLVTGAGPIGVMAAAIARHVGARHVVVTDVNDYRLDLARRMGASRAVNVAKEDLRAVMSELGMREGFDVGLEMSGNGRAFRQLLEVMNHGGKVALLGIMAGPEPIDWSQVVFKGLQLKGVYGREMYETWYKMVAMLQSGLDLTAVVTHRFSIDDFQQGFDVMRSGRSGKVVLDWGAAR</sequence>
<gene>
    <name evidence="1" type="primary">tdh</name>
    <name type="ordered locus">A2cp1_1862</name>
</gene>
<feature type="chain" id="PRO_1000147258" description="L-threonine 3-dehydrogenase">
    <location>
        <begin position="1"/>
        <end position="345"/>
    </location>
</feature>
<feature type="active site" description="Charge relay system" evidence="1">
    <location>
        <position position="41"/>
    </location>
</feature>
<feature type="active site" description="Charge relay system" evidence="1">
    <location>
        <position position="44"/>
    </location>
</feature>
<feature type="binding site" evidence="1">
    <location>
        <position position="39"/>
    </location>
    <ligand>
        <name>Zn(2+)</name>
        <dbReference type="ChEBI" id="CHEBI:29105"/>
        <label>1</label>
        <note>catalytic</note>
    </ligand>
</feature>
<feature type="binding site" evidence="1">
    <location>
        <position position="64"/>
    </location>
    <ligand>
        <name>Zn(2+)</name>
        <dbReference type="ChEBI" id="CHEBI:29105"/>
        <label>1</label>
        <note>catalytic</note>
    </ligand>
</feature>
<feature type="binding site" evidence="1">
    <location>
        <position position="65"/>
    </location>
    <ligand>
        <name>Zn(2+)</name>
        <dbReference type="ChEBI" id="CHEBI:29105"/>
        <label>1</label>
        <note>catalytic</note>
    </ligand>
</feature>
<feature type="binding site" evidence="1">
    <location>
        <position position="94"/>
    </location>
    <ligand>
        <name>Zn(2+)</name>
        <dbReference type="ChEBI" id="CHEBI:29105"/>
        <label>2</label>
    </ligand>
</feature>
<feature type="binding site" evidence="1">
    <location>
        <position position="97"/>
    </location>
    <ligand>
        <name>Zn(2+)</name>
        <dbReference type="ChEBI" id="CHEBI:29105"/>
        <label>2</label>
    </ligand>
</feature>
<feature type="binding site" evidence="1">
    <location>
        <position position="100"/>
    </location>
    <ligand>
        <name>Zn(2+)</name>
        <dbReference type="ChEBI" id="CHEBI:29105"/>
        <label>2</label>
    </ligand>
</feature>
<feature type="binding site" evidence="1">
    <location>
        <position position="108"/>
    </location>
    <ligand>
        <name>Zn(2+)</name>
        <dbReference type="ChEBI" id="CHEBI:29105"/>
        <label>2</label>
    </ligand>
</feature>
<feature type="binding site" evidence="1">
    <location>
        <position position="176"/>
    </location>
    <ligand>
        <name>NAD(+)</name>
        <dbReference type="ChEBI" id="CHEBI:57540"/>
    </ligand>
</feature>
<feature type="binding site" evidence="1">
    <location>
        <position position="196"/>
    </location>
    <ligand>
        <name>NAD(+)</name>
        <dbReference type="ChEBI" id="CHEBI:57540"/>
    </ligand>
</feature>
<feature type="binding site" evidence="1">
    <location>
        <position position="201"/>
    </location>
    <ligand>
        <name>NAD(+)</name>
        <dbReference type="ChEBI" id="CHEBI:57540"/>
    </ligand>
</feature>
<feature type="binding site" evidence="1">
    <location>
        <begin position="263"/>
        <end position="265"/>
    </location>
    <ligand>
        <name>NAD(+)</name>
        <dbReference type="ChEBI" id="CHEBI:57540"/>
    </ligand>
</feature>
<feature type="binding site" evidence="1">
    <location>
        <begin position="287"/>
        <end position="288"/>
    </location>
    <ligand>
        <name>NAD(+)</name>
        <dbReference type="ChEBI" id="CHEBI:57540"/>
    </ligand>
</feature>
<feature type="site" description="Important for catalytic activity for the proton relay mechanism but does not participate directly in the coordination of zinc atom" evidence="1">
    <location>
        <position position="149"/>
    </location>
</feature>
<name>TDH_ANAD2</name>
<keyword id="KW-0963">Cytoplasm</keyword>
<keyword id="KW-0479">Metal-binding</keyword>
<keyword id="KW-0520">NAD</keyword>
<keyword id="KW-0560">Oxidoreductase</keyword>
<keyword id="KW-0862">Zinc</keyword>
<accession>B8J714</accession>